<evidence type="ECO:0000255" key="1"/>
<evidence type="ECO:0000255" key="2">
    <source>
        <dbReference type="PROSITE-ProRule" id="PRU00498"/>
    </source>
</evidence>
<evidence type="ECO:0000269" key="3">
    <source>
    </source>
</evidence>
<evidence type="ECO:0000303" key="4">
    <source>
    </source>
</evidence>
<evidence type="ECO:0000305" key="5"/>
<evidence type="ECO:0000305" key="6">
    <source>
    </source>
</evidence>
<keyword id="KW-0325">Glycoprotein</keyword>
<keyword id="KW-0472">Membrane</keyword>
<keyword id="KW-1185">Reference proteome</keyword>
<keyword id="KW-0677">Repeat</keyword>
<keyword id="KW-0812">Transmembrane</keyword>
<keyword id="KW-1133">Transmembrane helix</keyword>
<keyword id="KW-0813">Transport</keyword>
<dbReference type="EMBL" id="DS547117">
    <property type="protein sequence ID" value="EDR04633.1"/>
    <property type="status" value="ALT_SEQ"/>
    <property type="molecule type" value="Genomic_DNA"/>
</dbReference>
<dbReference type="RefSeq" id="XP_001884805.1">
    <property type="nucleotide sequence ID" value="XM_001884770.1"/>
</dbReference>
<dbReference type="SMR" id="B0DLE4"/>
<dbReference type="FunCoup" id="B0DLE4">
    <property type="interactions" value="60"/>
</dbReference>
<dbReference type="STRING" id="486041.B0DLE4"/>
<dbReference type="GeneID" id="6080319"/>
<dbReference type="KEGG" id="lbc:LACBIDRAFT_252507"/>
<dbReference type="HOGENOM" id="CLU_020019_9_0_1"/>
<dbReference type="InParanoid" id="B0DLE4"/>
<dbReference type="OrthoDB" id="3222at2759"/>
<dbReference type="Proteomes" id="UP000001194">
    <property type="component" value="Unassembled WGS sequence"/>
</dbReference>
<dbReference type="GO" id="GO:0005886">
    <property type="term" value="C:plasma membrane"/>
    <property type="evidence" value="ECO:0007669"/>
    <property type="project" value="TreeGrafter"/>
</dbReference>
<dbReference type="GO" id="GO:0015254">
    <property type="term" value="F:glycerol channel activity"/>
    <property type="evidence" value="ECO:0007669"/>
    <property type="project" value="TreeGrafter"/>
</dbReference>
<dbReference type="GO" id="GO:0015250">
    <property type="term" value="F:water channel activity"/>
    <property type="evidence" value="ECO:0007669"/>
    <property type="project" value="TreeGrafter"/>
</dbReference>
<dbReference type="CDD" id="cd00333">
    <property type="entry name" value="MIP"/>
    <property type="match status" value="1"/>
</dbReference>
<dbReference type="FunFam" id="1.20.1080.10:FF:000027">
    <property type="entry name" value="MIP aquaporin"/>
    <property type="match status" value="1"/>
</dbReference>
<dbReference type="Gene3D" id="1.20.1080.10">
    <property type="entry name" value="Glycerol uptake facilitator protein"/>
    <property type="match status" value="1"/>
</dbReference>
<dbReference type="InterPro" id="IPR023271">
    <property type="entry name" value="Aquaporin-like"/>
</dbReference>
<dbReference type="InterPro" id="IPR000425">
    <property type="entry name" value="MIP"/>
</dbReference>
<dbReference type="InterPro" id="IPR050363">
    <property type="entry name" value="MIP/Aquaporin"/>
</dbReference>
<dbReference type="InterPro" id="IPR022357">
    <property type="entry name" value="MIP_CS"/>
</dbReference>
<dbReference type="NCBIfam" id="TIGR00861">
    <property type="entry name" value="MIP"/>
    <property type="match status" value="1"/>
</dbReference>
<dbReference type="PANTHER" id="PTHR43829">
    <property type="entry name" value="AQUAPORIN OR AQUAGLYCEROPORIN RELATED"/>
    <property type="match status" value="1"/>
</dbReference>
<dbReference type="PANTHER" id="PTHR43829:SF9">
    <property type="entry name" value="AQUAPORIN-9"/>
    <property type="match status" value="1"/>
</dbReference>
<dbReference type="Pfam" id="PF00230">
    <property type="entry name" value="MIP"/>
    <property type="match status" value="1"/>
</dbReference>
<dbReference type="PRINTS" id="PR00783">
    <property type="entry name" value="MINTRINSICP"/>
</dbReference>
<dbReference type="SUPFAM" id="SSF81338">
    <property type="entry name" value="Aquaporin-like"/>
    <property type="match status" value="1"/>
</dbReference>
<dbReference type="PROSITE" id="PS00221">
    <property type="entry name" value="MIP"/>
    <property type="match status" value="1"/>
</dbReference>
<feature type="chain" id="PRO_0000457457" description="Aquaporin Lacbi1:391485">
    <location>
        <begin position="1"/>
        <end position="312"/>
    </location>
</feature>
<feature type="topological domain" description="Cytoplasmic" evidence="6">
    <location>
        <begin position="1"/>
        <end position="50"/>
    </location>
</feature>
<feature type="transmembrane region" description="Helical" evidence="1">
    <location>
        <begin position="51"/>
        <end position="71"/>
    </location>
</feature>
<feature type="topological domain" description="Extracellular" evidence="6">
    <location>
        <begin position="72"/>
        <end position="89"/>
    </location>
</feature>
<feature type="transmembrane region" description="Helical" evidence="1">
    <location>
        <begin position="90"/>
        <end position="110"/>
    </location>
</feature>
<feature type="topological domain" description="Cytoplasmic" evidence="6">
    <location>
        <begin position="111"/>
        <end position="128"/>
    </location>
</feature>
<feature type="transmembrane region" description="Helical" evidence="1">
    <location>
        <begin position="129"/>
        <end position="149"/>
    </location>
</feature>
<feature type="topological domain" description="Extracellular" evidence="6">
    <location>
        <begin position="150"/>
        <end position="183"/>
    </location>
</feature>
<feature type="transmembrane region" description="Helical" evidence="1">
    <location>
        <begin position="184"/>
        <end position="204"/>
    </location>
</feature>
<feature type="topological domain" description="Cytoplasmic" evidence="6">
    <location>
        <begin position="205"/>
        <end position="213"/>
    </location>
</feature>
<feature type="transmembrane region" description="Helical" evidence="1">
    <location>
        <begin position="214"/>
        <end position="234"/>
    </location>
</feature>
<feature type="topological domain" description="Extracellular" evidence="6">
    <location>
        <begin position="235"/>
        <end position="267"/>
    </location>
</feature>
<feature type="transmembrane region" description="Helical" evidence="1">
    <location>
        <begin position="268"/>
        <end position="288"/>
    </location>
</feature>
<feature type="topological domain" description="Cytoplasmic" evidence="6">
    <location>
        <begin position="289"/>
        <end position="312"/>
    </location>
</feature>
<feature type="short sequence motif" description="NPA 1" evidence="6">
    <location>
        <begin position="111"/>
        <end position="113"/>
    </location>
</feature>
<feature type="short sequence motif" description="NPA 2" evidence="6">
    <location>
        <begin position="241"/>
        <end position="243"/>
    </location>
</feature>
<feature type="glycosylation site" description="N-linked (GlcNAc...) asparagine" evidence="2">
    <location>
        <position position="183"/>
    </location>
</feature>
<reference key="1">
    <citation type="journal article" date="2008" name="Nature">
        <title>The genome of Laccaria bicolor provides insights into mycorrhizal symbiosis.</title>
        <authorList>
            <person name="Martin F."/>
            <person name="Aerts A."/>
            <person name="Ahren D."/>
            <person name="Brun A."/>
            <person name="Danchin E.G.J."/>
            <person name="Duchaussoy F."/>
            <person name="Gibon J."/>
            <person name="Kohler A."/>
            <person name="Lindquist E."/>
            <person name="Pereda V."/>
            <person name="Salamov A."/>
            <person name="Shapiro H.J."/>
            <person name="Wuyts J."/>
            <person name="Blaudez D."/>
            <person name="Buee M."/>
            <person name="Brokstein P."/>
            <person name="Canbaeck B."/>
            <person name="Cohen D."/>
            <person name="Courty P.E."/>
            <person name="Coutinho P.M."/>
            <person name="Delaruelle C."/>
            <person name="Detter J.C."/>
            <person name="Deveau A."/>
            <person name="DiFazio S."/>
            <person name="Duplessis S."/>
            <person name="Fraissinet-Tachet L."/>
            <person name="Lucic E."/>
            <person name="Frey-Klett P."/>
            <person name="Fourrey C."/>
            <person name="Feussner I."/>
            <person name="Gay G."/>
            <person name="Grimwood J."/>
            <person name="Hoegger P.J."/>
            <person name="Jain P."/>
            <person name="Kilaru S."/>
            <person name="Labbe J."/>
            <person name="Lin Y.C."/>
            <person name="Legue V."/>
            <person name="Le Tacon F."/>
            <person name="Marmeisse R."/>
            <person name="Melayah D."/>
            <person name="Montanini B."/>
            <person name="Muratet M."/>
            <person name="Nehls U."/>
            <person name="Niculita-Hirzel H."/>
            <person name="Oudot-Le Secq M.P."/>
            <person name="Peter M."/>
            <person name="Quesneville H."/>
            <person name="Rajashekar B."/>
            <person name="Reich M."/>
            <person name="Rouhier N."/>
            <person name="Schmutz J."/>
            <person name="Yin T."/>
            <person name="Chalot M."/>
            <person name="Henrissat B."/>
            <person name="Kuees U."/>
            <person name="Lucas S."/>
            <person name="Van de Peer Y."/>
            <person name="Podila G.K."/>
            <person name="Polle A."/>
            <person name="Pukkila P.J."/>
            <person name="Richardson P.M."/>
            <person name="Rouze P."/>
            <person name="Sanders I.R."/>
            <person name="Stajich J.E."/>
            <person name="Tunlid A."/>
            <person name="Tuskan G."/>
            <person name="Grigoriev I.V."/>
        </authorList>
    </citation>
    <scope>NUCLEOTIDE SEQUENCE [LARGE SCALE GENOMIC DNA]</scope>
    <source>
        <strain>S238N-H82 / ATCC MYA-4686</strain>
    </source>
</reference>
<reference key="2">
    <citation type="journal article" date="2011" name="New Phytol.">
        <title>The aquaporin gene family of the ectomycorrhizal fungus Laccaria bicolor: lessons for symbiotic functions.</title>
        <authorList>
            <person name="Dietz S."/>
            <person name="von Buelow J."/>
            <person name="Beitz E."/>
            <person name="Nehls U."/>
        </authorList>
    </citation>
    <scope>FUNCTION</scope>
    <scope>DOMAIN</scope>
    <scope>TOPOLOGY</scope>
    <scope>TRANSPORTER ACTIVITY</scope>
    <scope>INDUCTION</scope>
</reference>
<gene>
    <name type="ORF">Lacbi1:391485</name>
    <name type="ORF">LACBIDRAFT_252507</name>
</gene>
<protein>
    <recommendedName>
        <fullName evidence="4">Aquaporin Lacbi1:391485</fullName>
    </recommendedName>
</protein>
<name>AQP6_LACBS</name>
<proteinExistence type="evidence at protein level"/>
<organism>
    <name type="scientific">Laccaria bicolor (strain S238N-H82 / ATCC MYA-4686)</name>
    <name type="common">Bicoloured deceiver</name>
    <name type="synonym">Laccaria laccata var. bicolor</name>
    <dbReference type="NCBI Taxonomy" id="486041"/>
    <lineage>
        <taxon>Eukaryota</taxon>
        <taxon>Fungi</taxon>
        <taxon>Dikarya</taxon>
        <taxon>Basidiomycota</taxon>
        <taxon>Agaricomycotina</taxon>
        <taxon>Agaricomycetes</taxon>
        <taxon>Agaricomycetidae</taxon>
        <taxon>Agaricales</taxon>
        <taxon>Agaricineae</taxon>
        <taxon>Hydnangiaceae</taxon>
        <taxon>Laccaria</taxon>
    </lineage>
</organism>
<comment type="function">
    <text evidence="3 6">Water channel required to facilitate the transport of water across membranes (PubMed:21352231). In addition to water, also shows strong glycerol and ammonium transport activities (PubMed:21352231). May be involved in fungal nitrogen (ammonium) support of the plant host in symbiosis (PubMed:21352231). Glycerol accumulation has never been observed in ectomycorrhizal (ECM) fungi, therefore, glycerol permeability of Lacbi1:391485 might be a relict of the affiliation of the protein to the group of aquaglyceroporins, and other osmotic active compounds (e.g. trehalose or mannitol) may have taken over glycerol function in ECM fungi (Probable).</text>
</comment>
<comment type="catalytic activity">
    <reaction evidence="3">
        <text>H2O(in) = H2O(out)</text>
        <dbReference type="Rhea" id="RHEA:29667"/>
        <dbReference type="ChEBI" id="CHEBI:15377"/>
    </reaction>
</comment>
<comment type="catalytic activity">
    <reaction evidence="3">
        <text>glycerol(in) = glycerol(out)</text>
        <dbReference type="Rhea" id="RHEA:29675"/>
        <dbReference type="ChEBI" id="CHEBI:17754"/>
    </reaction>
</comment>
<comment type="catalytic activity">
    <reaction evidence="3">
        <text>NH4(+)(in) = NH4(+)(out)</text>
        <dbReference type="Rhea" id="RHEA:28747"/>
        <dbReference type="ChEBI" id="CHEBI:28938"/>
    </reaction>
</comment>
<comment type="subcellular location">
    <subcellularLocation>
        <location evidence="1">Membrane</location>
        <topology evidence="1">Multi-pass membrane protein</topology>
    </subcellularLocation>
</comment>
<comment type="induction">
    <text evidence="3">Highly expressed 15 degrees Celsius (PubMed:21352231). The expression is comparable or even higher below 15 degrees Celsius, but transcript abundances decline at elevated temperatures (PubMed:21352231).</text>
</comment>
<comment type="domain">
    <text evidence="6">Aquaporins contain two tandem repeats each containing three membrane-spanning domains and a pore-forming loop with the signature motif Asn-Pro-Ala (NPA).</text>
</comment>
<comment type="similarity">
    <text evidence="5">Belongs to the MIP/aquaporin (TC 1.A.8) family.</text>
</comment>
<comment type="sequence caution" evidence="5">
    <conflict type="erroneous gene model prediction">
        <sequence resource="EMBL-CDS" id="EDR04633"/>
    </conflict>
</comment>
<accession>B0DLE4</accession>
<sequence length="312" mass="34015">MDDKFDDDALPNSKTTPEDYGDKLAEYDYTNTFPNTWMRLREPFREYIAEFVGVAVLIIFGVGADCQVVLSANTGVAPSPKGDYLSLNCGWAIGTAMGVWISGGISGGHINPAVTLALMAWRGFPWWKVPGFIFAQLLGGIVGAGLVYVNYIHAIDIVEGGRHIRTLDTAGLFATYAADYMTNVSCFFSEFLATAVLIVVIHAMNDKRNAPPPAGLAPLVLFFLILGIGASLGMETGYAINPARDLGPRMLTAMVGYGRQVFAFRNQYWIWCPVIAPFLGAQVGTIFYDLFFYKGQDNVFGRLGSHIHISPA</sequence>